<sequence>MSNVRVSNGSPSLERMDARQAEHPKPSACRNLFGPVDHEELTRDLEKHCRDMEEASQRKWNFDFQNHKPLEGKYEWQEVEKGSLPEFYYRPPRPPKGACKVPAQESQDVSGSRPAAPLIGAPANSEDTHLVDPKTDPSDSQTGLAEQCAGIRKRPATDDSSTQNKRANRTEENVSDGSPNAGSVEQTPKKPGLRRRQT</sequence>
<organism>
    <name type="scientific">Homo sapiens</name>
    <name type="common">Human</name>
    <dbReference type="NCBI Taxonomy" id="9606"/>
    <lineage>
        <taxon>Eukaryota</taxon>
        <taxon>Metazoa</taxon>
        <taxon>Chordata</taxon>
        <taxon>Craniata</taxon>
        <taxon>Vertebrata</taxon>
        <taxon>Euteleostomi</taxon>
        <taxon>Mammalia</taxon>
        <taxon>Eutheria</taxon>
        <taxon>Euarchontoglires</taxon>
        <taxon>Primates</taxon>
        <taxon>Haplorrhini</taxon>
        <taxon>Catarrhini</taxon>
        <taxon>Hominidae</taxon>
        <taxon>Homo</taxon>
    </lineage>
</organism>
<keyword id="KW-0002">3D-structure</keyword>
<keyword id="KW-0131">Cell cycle</keyword>
<keyword id="KW-0963">Cytoplasm</keyword>
<keyword id="KW-0903">Direct protein sequencing</keyword>
<keyword id="KW-0967">Endosome</keyword>
<keyword id="KW-0539">Nucleus</keyword>
<keyword id="KW-0597">Phosphoprotein</keyword>
<keyword id="KW-0649">Protein kinase inhibitor</keyword>
<keyword id="KW-1267">Proteomics identification</keyword>
<keyword id="KW-1185">Reference proteome</keyword>
<keyword id="KW-0043">Tumor suppressor</keyword>
<keyword id="KW-0832">Ubl conjugation</keyword>
<name>CDN1B_HUMAN</name>
<feature type="chain" id="PRO_0000190084" description="Cyclin-dependent kinase inhibitor 1B">
    <location>
        <begin position="1"/>
        <end position="198"/>
    </location>
</feature>
<feature type="region of interest" description="Disordered" evidence="4">
    <location>
        <begin position="1"/>
        <end position="34"/>
    </location>
</feature>
<feature type="region of interest" description="Interaction with CDK2" evidence="32">
    <location>
        <begin position="51"/>
        <end position="91"/>
    </location>
</feature>
<feature type="region of interest" description="Disordered" evidence="4">
    <location>
        <begin position="85"/>
        <end position="198"/>
    </location>
</feature>
<feature type="short sequence motif" description="Nuclear localization signal" evidence="3">
    <location>
        <begin position="153"/>
        <end position="169"/>
    </location>
</feature>
<feature type="compositionally biased region" description="Polar residues" evidence="4">
    <location>
        <begin position="1"/>
        <end position="11"/>
    </location>
</feature>
<feature type="compositionally biased region" description="Basic and acidic residues" evidence="4">
    <location>
        <begin position="14"/>
        <end position="25"/>
    </location>
</feature>
<feature type="compositionally biased region" description="Basic and acidic residues" evidence="4">
    <location>
        <begin position="126"/>
        <end position="137"/>
    </location>
</feature>
<feature type="compositionally biased region" description="Polar residues" evidence="4">
    <location>
        <begin position="175"/>
        <end position="186"/>
    </location>
</feature>
<feature type="modified residue" description="Phosphoserine; by UHMK1" evidence="6 7 8 12 44">
    <location>
        <position position="10"/>
    </location>
</feature>
<feature type="modified residue" description="Phosphotyrosine; by SRC" evidence="23">
    <location>
        <position position="74"/>
    </location>
</feature>
<feature type="modified residue" description="Phosphotyrosine; by ABL, LYN, SRC and JAK2" evidence="17 22 23 27">
    <location>
        <position position="88"/>
    </location>
</feature>
<feature type="modified residue" description="Phosphotyrosine" evidence="17">
    <location>
        <position position="89"/>
    </location>
</feature>
<feature type="modified residue" description="Phosphothreonine; by CaMK1, PKB/AKT1 and PIM1" evidence="9 10 24 30">
    <location>
        <position position="157"/>
    </location>
</feature>
<feature type="modified residue" description="Phosphothreonine" evidence="2">
    <location>
        <position position="170"/>
    </location>
</feature>
<feature type="modified residue" description="Phosphothreonine; by PKB/AKT1, CDK1 and CDK2" evidence="5 7 18 29">
    <location>
        <position position="187"/>
    </location>
</feature>
<feature type="modified residue" description="Phosphothreonine; by CaMK1, PKB/AKT1, RPS6KA1, RPS6KA3 and PIM1" evidence="7 12 13 24 30">
    <location>
        <position position="198"/>
    </location>
</feature>
<feature type="sequence variant" id="VAR_011871" description="In dbSNP:rs2066828." evidence="36">
    <original>R</original>
    <variation>W</variation>
    <location>
        <position position="15"/>
    </location>
</feature>
<feature type="sequence variant" id="VAR_064429" description="Found in a patient with multiple endocrine tumors; germline mutation; reduced expression levels; shows impaired binding to CDK2; dbSNP:rs777354267." evidence="26">
    <original>P</original>
    <variation>L</variation>
    <location>
        <position position="69"/>
    </location>
</feature>
<feature type="sequence variant" id="VAR_011872" description="In dbSNP:rs2066827." evidence="14 35 36">
    <original>V</original>
    <variation>G</variation>
    <location>
        <position position="109"/>
    </location>
</feature>
<feature type="mutagenesis site" description="Loss of phosphorylation by UHMK1. No translocation to the cytoplasm. Greater cell cycle arrest." evidence="7 8 13">
    <original>S</original>
    <variation>A</variation>
    <location>
        <position position="10"/>
    </location>
</feature>
<feature type="mutagenesis site" description="Exported to the cytoplasm. Inhibits cell cycle arrest." evidence="7 8 13">
    <original>S</original>
    <variation>D</variation>
    <location>
        <position position="10"/>
    </location>
</feature>
<feature type="mutagenesis site" description="Increased stability in vivo and in vitro." evidence="7 8 13">
    <original>S</original>
    <variation>E</variation>
    <location>
        <position position="10"/>
    </location>
</feature>
<feature type="mutagenesis site" description="No change in binding CDK4 and no inhibition of CDK4 activity. Translocates to nucleus. No effect on in vitro phosphorylation of CDK4 by CCNH-CDK7." evidence="17 25">
    <original>Y</original>
    <variation>F</variation>
    <location>
        <position position="74"/>
    </location>
</feature>
<feature type="mutagenesis site" description="Abolishes LYN-mediated phosphorylation, reduces CDK2-mediated phosphorylation on T-187, has greater cell cycle arrest into S-phase, no effect on binding CDK2 complexes, reduced CDK4 binding and inhibits CDK4 enzyme activity. No nuclear translocation. No effect on in vitro phosphorylation of CDK4 by CCNH-CDK7. Completely abolishes CDK4 binding; when associated with F-89." evidence="17 22 25">
    <original>Y</original>
    <variation>F</variation>
    <location>
        <position position="88"/>
    </location>
</feature>
<feature type="mutagenesis site" description="No effect on binding CDK2 complexes, reduced CDK4 binding and greatly inhibits CDK4 enzyme activity. No nuclear translocation. Inhibits in vitro phosphorylation of CDK4 by CCNH-CDK7. Completely abolishes CDK4 binding; when associated with F-88." evidence="17 22 25">
    <original>Y</original>
    <variation>F</variation>
    <location>
        <position position="89"/>
    </location>
</feature>
<feature type="mutagenesis site" description="Greatly reduced PKB/AKT1-mediated phosphorylation. Nuclear location. Inhibits cyclin E/CDK2 cell cycle progression. No effect on binding AKT1. Completely abolishes PKB/AKT1-mediated phosphorylation and no cytoplasmic translocation; when associated with A-198." evidence="7 9 10 12 13">
    <original>T</original>
    <variation>A</variation>
    <location>
        <position position="157"/>
    </location>
</feature>
<feature type="mutagenesis site" description="No change in PKB/AKT1-mediated phosphorylation." evidence="9">
    <original>S</original>
    <variation>A</variation>
    <location>
        <position position="161"/>
    </location>
</feature>
<feature type="mutagenesis site" description="No change in PKB/AKT1-mediated phosphorylation." evidence="9">
    <original>T</original>
    <variation>A</variation>
    <location>
        <position position="162"/>
    </location>
</feature>
<feature type="mutagenesis site" description="Strongly reduced ubiquitination by a TRIM21-containing SCF(SKP2) complex." evidence="18">
    <original>E</original>
    <variation>A</variation>
    <variation>D</variation>
    <variation>Q</variation>
    <location>
        <position position="185"/>
    </location>
</feature>
<feature type="mutagenesis site" description="No change in PKB/AKT1- nor UHMK1-mediated phosphorylation." evidence="7 8 13 18 20">
    <original>T</original>
    <variation>A</variation>
    <variation>D</variation>
    <location>
        <position position="187"/>
    </location>
</feature>
<feature type="mutagenesis site" description="Abolishes phosphorylation-dependent ubiquitination." evidence="7 8 13 18 20">
    <original>T</original>
    <variation>A</variation>
    <location>
        <position position="187"/>
    </location>
</feature>
<feature type="mutagenesis site" description="Abolishes PKB/AKT1-mediated phosphorylation. 46% cytoplasmic location. Greatly reduced binding to YWHAQ. Equally reduced binding; when associated with A-10 and A-187. No nuclear import; when associated with A-157. Completely abolishes PKB/AKT1-mediated phosphorylation and no cytoplasmic translocation; when associated with A-157." evidence="7 12 13">
    <original>T</original>
    <variation>A</variation>
    <variation>D</variation>
    <location>
        <position position="198"/>
    </location>
</feature>
<feature type="sequence conflict" description="In Ref. 2; AAD14244." evidence="42" ref="2">
    <original>E</original>
    <variation>D</variation>
    <location>
        <position position="22"/>
    </location>
</feature>
<feature type="helix" evidence="47">
    <location>
        <begin position="26"/>
        <end position="28"/>
    </location>
</feature>
<feature type="helix" evidence="46">
    <location>
        <begin position="38"/>
        <end position="47"/>
    </location>
</feature>
<feature type="turn" evidence="45">
    <location>
        <begin position="50"/>
        <end position="53"/>
    </location>
</feature>
<feature type="helix" evidence="46">
    <location>
        <begin position="55"/>
        <end position="60"/>
    </location>
</feature>
<feature type="turn" evidence="46">
    <location>
        <begin position="64"/>
        <end position="67"/>
    </location>
</feature>
<feature type="strand" evidence="46">
    <location>
        <begin position="71"/>
        <end position="78"/>
    </location>
</feature>
<feature type="turn" evidence="47">
    <location>
        <begin position="81"/>
        <end position="83"/>
    </location>
</feature>
<feature type="helix" evidence="45">
    <location>
        <begin position="86"/>
        <end position="89"/>
    </location>
</feature>
<proteinExistence type="evidence at protein level"/>
<dbReference type="EMBL" id="U10906">
    <property type="protein sequence ID" value="AAA20240.1"/>
    <property type="molecule type" value="mRNA"/>
</dbReference>
<dbReference type="EMBL" id="S76988">
    <property type="protein sequence ID" value="AAD14244.1"/>
    <property type="molecule type" value="Genomic_DNA"/>
</dbReference>
<dbReference type="EMBL" id="S76986">
    <property type="protein sequence ID" value="AAD14244.1"/>
    <property type="status" value="JOINED"/>
    <property type="molecule type" value="Genomic_DNA"/>
</dbReference>
<dbReference type="EMBL" id="BT019553">
    <property type="protein sequence ID" value="AAV38360.1"/>
    <property type="molecule type" value="mRNA"/>
</dbReference>
<dbReference type="EMBL" id="BT019554">
    <property type="protein sequence ID" value="AAV38361.1"/>
    <property type="molecule type" value="mRNA"/>
</dbReference>
<dbReference type="EMBL" id="AF480891">
    <property type="protein sequence ID" value="AAL78041.1"/>
    <property type="molecule type" value="Genomic_DNA"/>
</dbReference>
<dbReference type="EMBL" id="BC001971">
    <property type="protein sequence ID" value="AAH01971.1"/>
    <property type="molecule type" value="mRNA"/>
</dbReference>
<dbReference type="CCDS" id="CCDS8653.1"/>
<dbReference type="RefSeq" id="NP_004055.1">
    <property type="nucleotide sequence ID" value="NM_004064.5"/>
</dbReference>
<dbReference type="PDB" id="1H27">
    <property type="method" value="X-ray"/>
    <property type="resolution" value="2.20 A"/>
    <property type="chains" value="E=25-35"/>
</dbReference>
<dbReference type="PDB" id="1JSU">
    <property type="method" value="X-ray"/>
    <property type="resolution" value="2.30 A"/>
    <property type="chains" value="C=23-106"/>
</dbReference>
<dbReference type="PDB" id="2AST">
    <property type="method" value="X-ray"/>
    <property type="resolution" value="2.30 A"/>
    <property type="chains" value="D=181-190"/>
</dbReference>
<dbReference type="PDB" id="5UQ3">
    <property type="method" value="X-ray"/>
    <property type="resolution" value="3.60 A"/>
    <property type="chains" value="C=1-198"/>
</dbReference>
<dbReference type="PDB" id="6ATH">
    <property type="method" value="X-ray"/>
    <property type="resolution" value="1.82 A"/>
    <property type="chains" value="C=22-85"/>
</dbReference>
<dbReference type="PDB" id="6P8E">
    <property type="method" value="X-ray"/>
    <property type="resolution" value="2.30 A"/>
    <property type="chains" value="C=25-93"/>
</dbReference>
<dbReference type="PDB" id="6P8F">
    <property type="method" value="X-ray"/>
    <property type="resolution" value="2.89 A"/>
    <property type="chains" value="C=25-106"/>
</dbReference>
<dbReference type="PDB" id="6P8G">
    <property type="method" value="X-ray"/>
    <property type="resolution" value="2.80 A"/>
    <property type="chains" value="C=25-93"/>
</dbReference>
<dbReference type="PDB" id="7B5L">
    <property type="method" value="EM"/>
    <property type="resolution" value="3.80 A"/>
    <property type="chains" value="P=1-198"/>
</dbReference>
<dbReference type="PDB" id="7B5M">
    <property type="method" value="EM"/>
    <property type="resolution" value="3.91 A"/>
    <property type="chains" value="P=1-198"/>
</dbReference>
<dbReference type="PDB" id="7B5R">
    <property type="method" value="EM"/>
    <property type="resolution" value="3.80 A"/>
    <property type="chains" value="P=1-198"/>
</dbReference>
<dbReference type="PDB" id="7OR8">
    <property type="method" value="X-ray"/>
    <property type="resolution" value="1.80 A"/>
    <property type="chains" value="P=187-198"/>
</dbReference>
<dbReference type="PDB" id="7ORG">
    <property type="method" value="X-ray"/>
    <property type="resolution" value="1.80 A"/>
    <property type="chains" value="P=187-198"/>
</dbReference>
<dbReference type="PDB" id="7ORH">
    <property type="method" value="X-ray"/>
    <property type="resolution" value="1.80 A"/>
    <property type="chains" value="P=187-198"/>
</dbReference>
<dbReference type="PDB" id="7ORS">
    <property type="method" value="X-ray"/>
    <property type="resolution" value="1.80 A"/>
    <property type="chains" value="P=187-198"/>
</dbReference>
<dbReference type="PDB" id="7ORT">
    <property type="method" value="X-ray"/>
    <property type="resolution" value="2.33 A"/>
    <property type="chains" value="P=187-198"/>
</dbReference>
<dbReference type="PDB" id="8BYA">
    <property type="method" value="EM"/>
    <property type="resolution" value="3.38 A"/>
    <property type="chains" value="C=1-158, G=181-190"/>
</dbReference>
<dbReference type="PDB" id="8BYL">
    <property type="method" value="EM"/>
    <property type="resolution" value="3.50 A"/>
    <property type="chains" value="D=1-198"/>
</dbReference>
<dbReference type="PDB" id="8BZO">
    <property type="method" value="EM"/>
    <property type="resolution" value="3.50 A"/>
    <property type="chains" value="C=1-158"/>
</dbReference>
<dbReference type="PDBsum" id="1H27"/>
<dbReference type="PDBsum" id="1JSU"/>
<dbReference type="PDBsum" id="2AST"/>
<dbReference type="PDBsum" id="5UQ3"/>
<dbReference type="PDBsum" id="6ATH"/>
<dbReference type="PDBsum" id="6P8E"/>
<dbReference type="PDBsum" id="6P8F"/>
<dbReference type="PDBsum" id="6P8G"/>
<dbReference type="PDBsum" id="7B5L"/>
<dbReference type="PDBsum" id="7B5M"/>
<dbReference type="PDBsum" id="7B5R"/>
<dbReference type="PDBsum" id="7OR8"/>
<dbReference type="PDBsum" id="7ORG"/>
<dbReference type="PDBsum" id="7ORH"/>
<dbReference type="PDBsum" id="7ORS"/>
<dbReference type="PDBsum" id="7ORT"/>
<dbReference type="PDBsum" id="8BYA"/>
<dbReference type="PDBsum" id="8BYL"/>
<dbReference type="PDBsum" id="8BZO"/>
<dbReference type="BMRB" id="P46527"/>
<dbReference type="EMDB" id="EMD-12037"/>
<dbReference type="EMDB" id="EMD-12040"/>
<dbReference type="EMDB" id="EMD-12048"/>
<dbReference type="EMDB" id="EMD-16327"/>
<dbReference type="SMR" id="P46527"/>
<dbReference type="BioGRID" id="107461">
    <property type="interactions" value="139"/>
</dbReference>
<dbReference type="CORUM" id="P46527"/>
<dbReference type="DIP" id="DIP-33341N"/>
<dbReference type="FunCoup" id="P46527">
    <property type="interactions" value="3492"/>
</dbReference>
<dbReference type="IntAct" id="P46527">
    <property type="interactions" value="92"/>
</dbReference>
<dbReference type="MINT" id="P46527"/>
<dbReference type="STRING" id="9606.ENSP00000228872"/>
<dbReference type="ChEMBL" id="CHEMBL3758070"/>
<dbReference type="MoonDB" id="P46527">
    <property type="type" value="Predicted"/>
</dbReference>
<dbReference type="GlyGen" id="P46527">
    <property type="glycosylation" value="5 sites, 1 O-linked glycan (5 sites)"/>
</dbReference>
<dbReference type="iPTMnet" id="P46527"/>
<dbReference type="PhosphoSitePlus" id="P46527"/>
<dbReference type="BioMuta" id="CDKN1B"/>
<dbReference type="CPTAC" id="CPTAC-1237"/>
<dbReference type="CPTAC" id="CPTAC-1238"/>
<dbReference type="jPOST" id="P46527"/>
<dbReference type="MassIVE" id="P46527"/>
<dbReference type="PaxDb" id="9606-ENSP00000228872"/>
<dbReference type="PeptideAtlas" id="P46527"/>
<dbReference type="ProteomicsDB" id="55741"/>
<dbReference type="Pumba" id="P46527"/>
<dbReference type="TopDownProteomics" id="P46527"/>
<dbReference type="Antibodypedia" id="3295">
    <property type="antibodies" value="2755 antibodies from 48 providers"/>
</dbReference>
<dbReference type="DNASU" id="1027"/>
<dbReference type="Ensembl" id="ENST00000228872.9">
    <property type="protein sequence ID" value="ENSP00000228872.4"/>
    <property type="gene ID" value="ENSG00000111276.12"/>
</dbReference>
<dbReference type="Ensembl" id="ENST00000614874.2">
    <property type="protein sequence ID" value="ENSP00000507272.1"/>
    <property type="gene ID" value="ENSG00000111276.12"/>
</dbReference>
<dbReference type="GeneID" id="1027"/>
<dbReference type="KEGG" id="hsa:1027"/>
<dbReference type="MANE-Select" id="ENST00000228872.9">
    <property type="protein sequence ID" value="ENSP00000228872.4"/>
    <property type="RefSeq nucleotide sequence ID" value="NM_004064.5"/>
    <property type="RefSeq protein sequence ID" value="NP_004055.1"/>
</dbReference>
<dbReference type="AGR" id="HGNC:1785"/>
<dbReference type="CTD" id="1027"/>
<dbReference type="DisGeNET" id="1027"/>
<dbReference type="GeneCards" id="CDKN1B"/>
<dbReference type="GeneReviews" id="CDKN1B"/>
<dbReference type="HGNC" id="HGNC:1785">
    <property type="gene designation" value="CDKN1B"/>
</dbReference>
<dbReference type="HPA" id="ENSG00000111276">
    <property type="expression patterns" value="Low tissue specificity"/>
</dbReference>
<dbReference type="MalaCards" id="CDKN1B"/>
<dbReference type="MIM" id="600778">
    <property type="type" value="gene"/>
</dbReference>
<dbReference type="MIM" id="610755">
    <property type="type" value="phenotype"/>
</dbReference>
<dbReference type="neXtProt" id="NX_P46527"/>
<dbReference type="OpenTargets" id="ENSG00000111276"/>
<dbReference type="Orphanet" id="652">
    <property type="disease" value="Multiple endocrine neoplasia type 1"/>
</dbReference>
<dbReference type="Orphanet" id="276152">
    <property type="disease" value="Multiple endocrine neoplasia type 4"/>
</dbReference>
<dbReference type="PharmGKB" id="PA105"/>
<dbReference type="VEuPathDB" id="HostDB:ENSG00000111276"/>
<dbReference type="eggNOG" id="KOG4743">
    <property type="taxonomic scope" value="Eukaryota"/>
</dbReference>
<dbReference type="GeneTree" id="ENSGT00940000159852"/>
<dbReference type="HOGENOM" id="CLU_077692_2_0_1"/>
<dbReference type="InParanoid" id="P46527"/>
<dbReference type="OMA" id="THLRDQK"/>
<dbReference type="OrthoDB" id="6373236at2759"/>
<dbReference type="PAN-GO" id="P46527">
    <property type="GO annotations" value="8 GO annotations based on evolutionary models"/>
</dbReference>
<dbReference type="PhylomeDB" id="P46527"/>
<dbReference type="TreeFam" id="TF101038"/>
<dbReference type="PathwayCommons" id="P46527"/>
<dbReference type="Reactome" id="R-HSA-187577">
    <property type="pathway name" value="SCF(Skp2)-mediated degradation of p27/p21"/>
</dbReference>
<dbReference type="Reactome" id="R-HSA-198323">
    <property type="pathway name" value="AKT phosphorylates targets in the cytosol"/>
</dbReference>
<dbReference type="Reactome" id="R-HSA-2559582">
    <property type="pathway name" value="Senescence-Associated Secretory Phenotype (SASP)"/>
</dbReference>
<dbReference type="Reactome" id="R-HSA-2559586">
    <property type="pathway name" value="DNA Damage/Telomere Stress Induced Senescence"/>
</dbReference>
<dbReference type="Reactome" id="R-HSA-5625900">
    <property type="pathway name" value="RHO GTPases activate CIT"/>
</dbReference>
<dbReference type="Reactome" id="R-HSA-5674400">
    <property type="pathway name" value="Constitutive Signaling by AKT1 E17K in Cancer"/>
</dbReference>
<dbReference type="Reactome" id="R-HSA-6804116">
    <property type="pathway name" value="TP53 Regulates Transcription of Genes Involved in G1 Cell Cycle Arrest"/>
</dbReference>
<dbReference type="Reactome" id="R-HSA-69202">
    <property type="pathway name" value="Cyclin E associated events during G1/S transition"/>
</dbReference>
<dbReference type="Reactome" id="R-HSA-69231">
    <property type="pathway name" value="Cyclin D associated events in G1"/>
</dbReference>
<dbReference type="Reactome" id="R-HSA-69563">
    <property type="pathway name" value="p53-Dependent G1 DNA Damage Response"/>
</dbReference>
<dbReference type="Reactome" id="R-HSA-69656">
    <property type="pathway name" value="Cyclin A:Cdk2-associated events at S phase entry"/>
</dbReference>
<dbReference type="Reactome" id="R-HSA-8849470">
    <property type="pathway name" value="PTK6 Regulates Cell Cycle"/>
</dbReference>
<dbReference type="Reactome" id="R-HSA-9607240">
    <property type="pathway name" value="FLT3 Signaling"/>
</dbReference>
<dbReference type="Reactome" id="R-HSA-9617828">
    <property type="pathway name" value="FOXO-mediated transcription of cell cycle genes"/>
</dbReference>
<dbReference type="Reactome" id="R-HSA-9634638">
    <property type="pathway name" value="Estrogen-dependent nuclear events downstream of ESR-membrane signaling"/>
</dbReference>
<dbReference type="Reactome" id="R-HSA-9661069">
    <property type="pathway name" value="Defective binding of RB1 mutants to E2F1,(E2F2, E2F3)"/>
</dbReference>
<dbReference type="SignaLink" id="P46527"/>
<dbReference type="SIGNOR" id="P46527"/>
<dbReference type="BioGRID-ORCS" id="1027">
    <property type="hits" value="28 hits in 1176 CRISPR screens"/>
</dbReference>
<dbReference type="ChiTaRS" id="CDKN1B">
    <property type="organism name" value="human"/>
</dbReference>
<dbReference type="EvolutionaryTrace" id="P46527"/>
<dbReference type="GeneWiki" id="CDKN1B"/>
<dbReference type="GenomeRNAi" id="1027"/>
<dbReference type="Pharos" id="P46527">
    <property type="development level" value="Tbio"/>
</dbReference>
<dbReference type="PRO" id="PR:P46527"/>
<dbReference type="Proteomes" id="UP000005640">
    <property type="component" value="Chromosome 12"/>
</dbReference>
<dbReference type="RNAct" id="P46527">
    <property type="molecule type" value="protein"/>
</dbReference>
<dbReference type="Bgee" id="ENSG00000111276">
    <property type="expression patterns" value="Expressed in pigmented layer of retina and 215 other cell types or tissues"/>
</dbReference>
<dbReference type="ExpressionAtlas" id="P46527">
    <property type="expression patterns" value="baseline and differential"/>
</dbReference>
<dbReference type="GO" id="GO:0005813">
    <property type="term" value="C:centrosome"/>
    <property type="evidence" value="ECO:0000314"/>
    <property type="project" value="HPA"/>
</dbReference>
<dbReference type="GO" id="GO:0036064">
    <property type="term" value="C:ciliary basal body"/>
    <property type="evidence" value="ECO:0000314"/>
    <property type="project" value="HPA"/>
</dbReference>
<dbReference type="GO" id="GO:0005929">
    <property type="term" value="C:cilium"/>
    <property type="evidence" value="ECO:0000314"/>
    <property type="project" value="HPA"/>
</dbReference>
<dbReference type="GO" id="GO:0031464">
    <property type="term" value="C:Cul4A-RING E3 ubiquitin ligase complex"/>
    <property type="evidence" value="ECO:0000314"/>
    <property type="project" value="MGI"/>
</dbReference>
<dbReference type="GO" id="GO:0005737">
    <property type="term" value="C:cytoplasm"/>
    <property type="evidence" value="ECO:0000314"/>
    <property type="project" value="HGNC-UCL"/>
</dbReference>
<dbReference type="GO" id="GO:0005829">
    <property type="term" value="C:cytosol"/>
    <property type="evidence" value="ECO:0000314"/>
    <property type="project" value="HPA"/>
</dbReference>
<dbReference type="GO" id="GO:0005768">
    <property type="term" value="C:endosome"/>
    <property type="evidence" value="ECO:0007669"/>
    <property type="project" value="UniProtKB-SubCell"/>
</dbReference>
<dbReference type="GO" id="GO:0005654">
    <property type="term" value="C:nucleoplasm"/>
    <property type="evidence" value="ECO:0000314"/>
    <property type="project" value="HPA"/>
</dbReference>
<dbReference type="GO" id="GO:0005634">
    <property type="term" value="C:nucleus"/>
    <property type="evidence" value="ECO:0000314"/>
    <property type="project" value="BHF-UCL"/>
</dbReference>
<dbReference type="GO" id="GO:0030332">
    <property type="term" value="F:cyclin binding"/>
    <property type="evidence" value="ECO:0000353"/>
    <property type="project" value="CAFA"/>
</dbReference>
<dbReference type="GO" id="GO:0019914">
    <property type="term" value="F:cyclin-dependent protein kinase activating kinase regulator activity"/>
    <property type="evidence" value="ECO:0000269"/>
    <property type="project" value="DisProt"/>
</dbReference>
<dbReference type="GO" id="GO:0004861">
    <property type="term" value="F:cyclin-dependent protein serine/threonine kinase inhibitor activity"/>
    <property type="evidence" value="ECO:0000314"/>
    <property type="project" value="UniProtKB"/>
</dbReference>
<dbReference type="GO" id="GO:0060090">
    <property type="term" value="F:molecular adaptor activity"/>
    <property type="evidence" value="ECO:0000269"/>
    <property type="project" value="DisProt"/>
</dbReference>
<dbReference type="GO" id="GO:0140678">
    <property type="term" value="F:molecular function inhibitor activity"/>
    <property type="evidence" value="ECO:0000315"/>
    <property type="project" value="DisProt"/>
</dbReference>
<dbReference type="GO" id="GO:0019901">
    <property type="term" value="F:protein kinase binding"/>
    <property type="evidence" value="ECO:0000353"/>
    <property type="project" value="CAFA"/>
</dbReference>
<dbReference type="GO" id="GO:0004860">
    <property type="term" value="F:protein kinase inhibitor activity"/>
    <property type="evidence" value="ECO:0000315"/>
    <property type="project" value="CAFA"/>
</dbReference>
<dbReference type="GO" id="GO:0019903">
    <property type="term" value="F:protein phosphatase binding"/>
    <property type="evidence" value="ECO:0000353"/>
    <property type="project" value="BHF-UCL"/>
</dbReference>
<dbReference type="GO" id="GO:0044877">
    <property type="term" value="F:protein-containing complex binding"/>
    <property type="evidence" value="ECO:0000353"/>
    <property type="project" value="CAFA"/>
</dbReference>
<dbReference type="GO" id="GO:0051087">
    <property type="term" value="F:protein-folding chaperone binding"/>
    <property type="evidence" value="ECO:0000318"/>
    <property type="project" value="GO_Central"/>
</dbReference>
<dbReference type="GO" id="GO:1990757">
    <property type="term" value="F:ubiquitin ligase activator activity"/>
    <property type="evidence" value="ECO:0000269"/>
    <property type="project" value="DisProt"/>
</dbReference>
<dbReference type="GO" id="GO:0031625">
    <property type="term" value="F:ubiquitin protein ligase binding"/>
    <property type="evidence" value="ECO:0000269"/>
    <property type="project" value="DisProt"/>
</dbReference>
<dbReference type="GO" id="GO:0048102">
    <property type="term" value="P:autophagic cell death"/>
    <property type="evidence" value="ECO:0000314"/>
    <property type="project" value="BHF-UCL"/>
</dbReference>
<dbReference type="GO" id="GO:0071236">
    <property type="term" value="P:cellular response to antibiotic"/>
    <property type="evidence" value="ECO:0007669"/>
    <property type="project" value="Ensembl"/>
</dbReference>
<dbReference type="GO" id="GO:0071285">
    <property type="term" value="P:cellular response to lithium ion"/>
    <property type="evidence" value="ECO:0000314"/>
    <property type="project" value="MGI"/>
</dbReference>
<dbReference type="GO" id="GO:0090398">
    <property type="term" value="P:cellular senescence"/>
    <property type="evidence" value="ECO:0000304"/>
    <property type="project" value="Reactome"/>
</dbReference>
<dbReference type="GO" id="GO:0030330">
    <property type="term" value="P:DNA damage response, signal transduction by p53 class mediator"/>
    <property type="evidence" value="ECO:0000304"/>
    <property type="project" value="Reactome"/>
</dbReference>
<dbReference type="GO" id="GO:1904019">
    <property type="term" value="P:epithelial cell apoptotic process"/>
    <property type="evidence" value="ECO:0007669"/>
    <property type="project" value="Ensembl"/>
</dbReference>
<dbReference type="GO" id="GO:0060767">
    <property type="term" value="P:epithelial cell proliferation involved in prostate gland development"/>
    <property type="evidence" value="ECO:0007669"/>
    <property type="project" value="Ensembl"/>
</dbReference>
<dbReference type="GO" id="GO:0000082">
    <property type="term" value="P:G1/S transition of mitotic cell cycle"/>
    <property type="evidence" value="ECO:0000318"/>
    <property type="project" value="GO_Central"/>
</dbReference>
<dbReference type="GO" id="GO:0007507">
    <property type="term" value="P:heart development"/>
    <property type="evidence" value="ECO:0000250"/>
    <property type="project" value="BHF-UCL"/>
</dbReference>
<dbReference type="GO" id="GO:0048839">
    <property type="term" value="P:inner ear development"/>
    <property type="evidence" value="ECO:0007669"/>
    <property type="project" value="Ensembl"/>
</dbReference>
<dbReference type="GO" id="GO:1905179">
    <property type="term" value="P:negative regulation of cardiac muscle tissue regeneration"/>
    <property type="evidence" value="ECO:0000250"/>
    <property type="project" value="BHF-UCL"/>
</dbReference>
<dbReference type="GO" id="GO:0030308">
    <property type="term" value="P:negative regulation of cell growth"/>
    <property type="evidence" value="ECO:0000314"/>
    <property type="project" value="BHF-UCL"/>
</dbReference>
<dbReference type="GO" id="GO:0008285">
    <property type="term" value="P:negative regulation of cell population proliferation"/>
    <property type="evidence" value="ECO:0000315"/>
    <property type="project" value="BHF-UCL"/>
</dbReference>
<dbReference type="GO" id="GO:1904030">
    <property type="term" value="P:negative regulation of cyclin-dependent protein kinase activity"/>
    <property type="evidence" value="ECO:0000315"/>
    <property type="project" value="CAFA"/>
</dbReference>
<dbReference type="GO" id="GO:0045736">
    <property type="term" value="P:negative regulation of cyclin-dependent protein serine/threonine kinase activity"/>
    <property type="evidence" value="ECO:0000314"/>
    <property type="project" value="UniProtKB"/>
</dbReference>
<dbReference type="GO" id="GO:0045892">
    <property type="term" value="P:negative regulation of DNA-templated transcription"/>
    <property type="evidence" value="ECO:0000314"/>
    <property type="project" value="UniProtKB"/>
</dbReference>
<dbReference type="GO" id="GO:1904036">
    <property type="term" value="P:negative regulation of epithelial cell apoptotic process"/>
    <property type="evidence" value="ECO:0007669"/>
    <property type="project" value="Ensembl"/>
</dbReference>
<dbReference type="GO" id="GO:0050680">
    <property type="term" value="P:negative regulation of epithelial cell proliferation"/>
    <property type="evidence" value="ECO:0000318"/>
    <property type="project" value="GO_Central"/>
</dbReference>
<dbReference type="GO" id="GO:0060770">
    <property type="term" value="P:negative regulation of epithelial cell proliferation involved in prostate gland development"/>
    <property type="evidence" value="ECO:0007669"/>
    <property type="project" value="Ensembl"/>
</dbReference>
<dbReference type="GO" id="GO:0033673">
    <property type="term" value="P:negative regulation of kinase activity"/>
    <property type="evidence" value="ECO:0000314"/>
    <property type="project" value="UniProtKB"/>
</dbReference>
<dbReference type="GO" id="GO:0045930">
    <property type="term" value="P:negative regulation of mitotic cell cycle"/>
    <property type="evidence" value="ECO:0000318"/>
    <property type="project" value="GO_Central"/>
</dbReference>
<dbReference type="GO" id="GO:1904706">
    <property type="term" value="P:negative regulation of vascular associated smooth muscle cell proliferation"/>
    <property type="evidence" value="ECO:0000315"/>
    <property type="project" value="BHF-UCL"/>
</dbReference>
<dbReference type="GO" id="GO:0007219">
    <property type="term" value="P:Notch signaling pathway"/>
    <property type="evidence" value="ECO:0007669"/>
    <property type="project" value="Ensembl"/>
</dbReference>
<dbReference type="GO" id="GO:0051168">
    <property type="term" value="P:nuclear export"/>
    <property type="evidence" value="ECO:0000315"/>
    <property type="project" value="DisProt"/>
</dbReference>
<dbReference type="GO" id="GO:0001890">
    <property type="term" value="P:placenta development"/>
    <property type="evidence" value="ECO:0007669"/>
    <property type="project" value="Ensembl"/>
</dbReference>
<dbReference type="GO" id="GO:0008284">
    <property type="term" value="P:positive regulation of cell population proliferation"/>
    <property type="evidence" value="ECO:0007669"/>
    <property type="project" value="Ensembl"/>
</dbReference>
<dbReference type="GO" id="GO:0045740">
    <property type="term" value="P:positive regulation of DNA replication"/>
    <property type="evidence" value="ECO:0000304"/>
    <property type="project" value="Reactome"/>
</dbReference>
<dbReference type="GO" id="GO:0031116">
    <property type="term" value="P:positive regulation of microtubule polymerization"/>
    <property type="evidence" value="ECO:0007669"/>
    <property type="project" value="Ensembl"/>
</dbReference>
<dbReference type="GO" id="GO:0045732">
    <property type="term" value="P:positive regulation of protein catabolic process"/>
    <property type="evidence" value="ECO:0000314"/>
    <property type="project" value="MGI"/>
</dbReference>
<dbReference type="GO" id="GO:0006813">
    <property type="term" value="P:potassium ion transport"/>
    <property type="evidence" value="ECO:0007669"/>
    <property type="project" value="Ensembl"/>
</dbReference>
<dbReference type="GO" id="GO:0051726">
    <property type="term" value="P:regulation of cell cycle"/>
    <property type="evidence" value="ECO:0000315"/>
    <property type="project" value="HGNC-UCL"/>
</dbReference>
<dbReference type="GO" id="GO:1902806">
    <property type="term" value="P:regulation of cell cycle G1/S phase transition"/>
    <property type="evidence" value="ECO:0000315"/>
    <property type="project" value="GO_Central"/>
</dbReference>
<dbReference type="GO" id="GO:0030334">
    <property type="term" value="P:regulation of cell migration"/>
    <property type="evidence" value="ECO:0007669"/>
    <property type="project" value="Ensembl"/>
</dbReference>
<dbReference type="GO" id="GO:0000079">
    <property type="term" value="P:regulation of cyclin-dependent protein serine/threonine kinase activity"/>
    <property type="evidence" value="ECO:0000314"/>
    <property type="project" value="GO_Central"/>
</dbReference>
<dbReference type="GO" id="GO:0007096">
    <property type="term" value="P:regulation of exit from mitosis"/>
    <property type="evidence" value="ECO:0007669"/>
    <property type="project" value="Ensembl"/>
</dbReference>
<dbReference type="GO" id="GO:2000045">
    <property type="term" value="P:regulation of G1/S transition of mitotic cell cycle"/>
    <property type="evidence" value="ECO:0000314"/>
    <property type="project" value="BHF-UCL"/>
</dbReference>
<dbReference type="GO" id="GO:1902746">
    <property type="term" value="P:regulation of lens fiber cell differentiation"/>
    <property type="evidence" value="ECO:0007669"/>
    <property type="project" value="Ensembl"/>
</dbReference>
<dbReference type="GO" id="GO:0007605">
    <property type="term" value="P:sensory perception of sound"/>
    <property type="evidence" value="ECO:0007669"/>
    <property type="project" value="Ensembl"/>
</dbReference>
<dbReference type="DisProt" id="DP00018"/>
<dbReference type="FunFam" id="4.10.365.10:FF:000001">
    <property type="entry name" value="Cyclin-dependent kinase inhibitor 1B"/>
    <property type="match status" value="1"/>
</dbReference>
<dbReference type="Gene3D" id="4.10.365.10">
    <property type="entry name" value="p27"/>
    <property type="match status" value="1"/>
</dbReference>
<dbReference type="IDEAL" id="IID00049"/>
<dbReference type="InterPro" id="IPR003175">
    <property type="entry name" value="CDI_dom"/>
</dbReference>
<dbReference type="InterPro" id="IPR044898">
    <property type="entry name" value="CDI_dom_sf"/>
</dbReference>
<dbReference type="PANTHER" id="PTHR10265">
    <property type="entry name" value="CYCLIN-DEPENDENT KINASE INHIBITOR 1"/>
    <property type="match status" value="1"/>
</dbReference>
<dbReference type="PANTHER" id="PTHR10265:SF9">
    <property type="entry name" value="CYCLIN-DEPENDENT KINASE INHIBITOR 1B"/>
    <property type="match status" value="1"/>
</dbReference>
<dbReference type="Pfam" id="PF02234">
    <property type="entry name" value="CDI"/>
    <property type="match status" value="1"/>
</dbReference>
<comment type="function">
    <text evidence="6 9 19 22 25 32">Important regulator of cell cycle progression. Inhibits the kinase activity of CDK2 bound to cyclin A, but has little inhibitory activity on CDK2 bound to SPDYA (PubMed:28666995). Involved in G1 arrest. Potent inhibitor of cyclin E- and cyclin A-CDK2 complexes. Forms a complex with cyclin type D-CDK4 complexes and is involved in the assembly, stability, and modulation of CCND1-CDK4 complex activation. Acts either as an inhibitor or an activator of cyclin type D-CDK4 complexes depending on its phosphorylation state and/or stoichometry.</text>
</comment>
<comment type="subunit">
    <text evidence="1 7 8 9 11 12 16 17 18 19 22 24 25 28 31 32 34">Forms a ternary complex composed of CCNE1, CDK2 and CDKN1B. Interacts directly with CCNE1; the interaction is inhibited by CDK2-dependent phosphorylation on Thr-187. Interacts with COPS5, subunit of the COP9 signalosome complex; the interaction leads to CDKN1B degradation. Interacts with NUP50; the interaction leads to nuclear import and degradation of phosphorylated CDKN1B. Interacts with CCND1 and SNX6 (By similarity). Interacts (Thr-198-phosphorylated form) with 14-3-3 proteins, binds strongly YWHAQ, weakly YWHAE and YWHAH, but not YWHAB nor YWHAZ; the interaction with YWHAQ results in translocation to the cytoplasm (PubMed:14504289). Interacts with AKT1 and LYN; the interactions lead to cytoplasmic mislocation, phosphorylation of CDKN1B and inhibition of cell cycle arrest (PubMed:12042314, PubMed:12244301, PubMed:17254966). Forms a ternary complex with CCNA2 and CDK2; CDKN1B inhibits the kinase activity of CDK2 through conformational rearrangements. Interacts (unphosphorylated form) with CDK2. Forms a complex with CDK2 and SPDYA, but does not directly interact with SPDYA (PubMed:12972555, PubMed:28666995). Forms a ternary complex composed of cyclin D, CDK4 and CDKN1B. Interacts (phosphorylated on Tyr-88 and Tyr-89) with CDK4; the interaction is required for cyclin D and CDK4 complex assembly, induces nuclear translocation and activates the CDK4 kinase activity. Interacts with GRB2 (PubMed:16195327). Interacts with PIM1 (PubMed:18593906). Identified in a complex with SKP1, SKP2 and CKS1B (PubMed:16209941). Interacts with UHMK1; the interaction leads to cytoplasmic mislocation, phosphorylation of CDKN1B and inhibition of cell cycle arrest (PubMed:12093740). Also interacts with CDK1 (PubMed:16007079). Dephosphorylated on Thr-187 by PPM1H, leading to CDKN1B stability (PubMed:22586611). Interacts with HSPA8; the interaction may be associated with susceptibility to ubiquitination (PubMed:26775844).</text>
</comment>
<comment type="interaction">
    <interactant intactId="EBI-519280">
        <id>P46527</id>
    </interactant>
    <interactant intactId="EBI-11524452">
        <id>Q8N9N5-2</id>
        <label>BANP</label>
    </interactant>
    <organismsDiffer>false</organismsDiffer>
    <experiments>3</experiments>
</comment>
<comment type="interaction">
    <interactant intactId="EBI-519280">
        <id>P46527</id>
    </interactant>
    <interactant intactId="EBI-375065">
        <id>P78396</id>
        <label>CCNA1</label>
    </interactant>
    <organismsDiffer>false</organismsDiffer>
    <experiments>7</experiments>
</comment>
<comment type="interaction">
    <interactant intactId="EBI-519280">
        <id>P46527</id>
    </interactant>
    <interactant intactId="EBI-457097">
        <id>P20248</id>
        <label>CCNA2</label>
    </interactant>
    <organismsDiffer>false</organismsDiffer>
    <experiments>21</experiments>
</comment>
<comment type="interaction">
    <interactant intactId="EBI-519280">
        <id>P46527</id>
    </interactant>
    <interactant intactId="EBI-495332">
        <id>P14635</id>
        <label>CCNB1</label>
    </interactant>
    <organismsDiffer>false</organismsDiffer>
    <experiments>6</experiments>
</comment>
<comment type="interaction">
    <interactant intactId="EBI-519280">
        <id>P46527</id>
    </interactant>
    <interactant intactId="EBI-375001">
        <id>P24385</id>
        <label>CCND1</label>
    </interactant>
    <organismsDiffer>false</organismsDiffer>
    <experiments>12</experiments>
</comment>
<comment type="interaction">
    <interactant intactId="EBI-519280">
        <id>P46527</id>
    </interactant>
    <interactant intactId="EBI-748789">
        <id>P30279</id>
        <label>CCND2</label>
    </interactant>
    <organismsDiffer>false</organismsDiffer>
    <experiments>8</experiments>
</comment>
<comment type="interaction">
    <interactant intactId="EBI-519280">
        <id>P46527</id>
    </interactant>
    <interactant intactId="EBI-375013">
        <id>P30281</id>
        <label>CCND3</label>
    </interactant>
    <organismsDiffer>false</organismsDiffer>
    <experiments>9</experiments>
</comment>
<comment type="interaction">
    <interactant intactId="EBI-519280">
        <id>P46527</id>
    </interactant>
    <interactant intactId="EBI-519526">
        <id>P24864</id>
        <label>CCNE1</label>
    </interactant>
    <organismsDiffer>false</organismsDiffer>
    <experiments>12</experiments>
</comment>
<comment type="interaction">
    <interactant intactId="EBI-519280">
        <id>P46527</id>
    </interactant>
    <interactant intactId="EBI-375033">
        <id>O96020</id>
        <label>CCNE2</label>
    </interactant>
    <organismsDiffer>false</organismsDiffer>
    <experiments>6</experiments>
</comment>
<comment type="interaction">
    <interactant intactId="EBI-519280">
        <id>P46527</id>
    </interactant>
    <interactant intactId="EBI-444308">
        <id>P06493</id>
        <label>CDK1</label>
    </interactant>
    <organismsDiffer>false</organismsDiffer>
    <experiments>9</experiments>
</comment>
<comment type="interaction">
    <interactant intactId="EBI-519280">
        <id>P46527</id>
    </interactant>
    <interactant intactId="EBI-375096">
        <id>P24941</id>
        <label>CDK2</label>
    </interactant>
    <organismsDiffer>false</organismsDiffer>
    <experiments>31</experiments>
</comment>
<comment type="interaction">
    <interactant intactId="EBI-519280">
        <id>P46527</id>
    </interactant>
    <interactant intactId="EBI-295644">
        <id>P11802</id>
        <label>CDK4</label>
    </interactant>
    <organismsDiffer>false</organismsDiffer>
    <experiments>13</experiments>
</comment>
<comment type="interaction">
    <interactant intactId="EBI-519280">
        <id>P46527</id>
    </interactant>
    <interactant intactId="EBI-1041567">
        <id>Q00535</id>
        <label>CDK5</label>
    </interactant>
    <organismsDiffer>false</organismsDiffer>
    <experiments>14</experiments>
</comment>
<comment type="interaction">
    <interactant intactId="EBI-519280">
        <id>P46527</id>
    </interactant>
    <interactant intactId="EBI-81249">
        <id>O15111</id>
        <label>CHUK</label>
    </interactant>
    <organismsDiffer>false</organismsDiffer>
    <experiments>4</experiments>
</comment>
<comment type="interaction">
    <interactant intactId="EBI-519280">
        <id>P46527</id>
    </interactant>
    <interactant intactId="EBI-594661">
        <id>Q92905</id>
        <label>COPS5</label>
    </interactant>
    <organismsDiffer>false</organismsDiffer>
    <experiments>3</experiments>
</comment>
<comment type="interaction">
    <interactant intactId="EBI-519280">
        <id>P46527</id>
    </interactant>
    <interactant intactId="EBI-359390">
        <id>Q13616</id>
        <label>CUL1</label>
    </interactant>
    <organismsDiffer>false</organismsDiffer>
    <experiments>2</experiments>
</comment>
<comment type="interaction">
    <interactant intactId="EBI-519280">
        <id>P46527</id>
    </interactant>
    <interactant intactId="EBI-358297">
        <id>O00505</id>
        <label>KPNA3</label>
    </interactant>
    <organismsDiffer>false</organismsDiffer>
    <experiments>4</experiments>
</comment>
<comment type="interaction">
    <interactant intactId="EBI-519280">
        <id>P46527</id>
    </interactant>
    <interactant intactId="EBI-540602">
        <id>O15131</id>
        <label>KPNA5</label>
    </interactant>
    <organismsDiffer>false</organismsDiffer>
    <experiments>6</experiments>
</comment>
<comment type="interaction">
    <interactant intactId="EBI-519280">
        <id>P46527</id>
    </interactant>
    <interactant intactId="EBI-79452">
        <id>P07948</id>
        <label>LYN</label>
    </interactant>
    <organismsDiffer>false</organismsDiffer>
    <experiments>2</experiments>
</comment>
<comment type="interaction">
    <interactant intactId="EBI-519280">
        <id>P46527</id>
    </interactant>
    <interactant intactId="EBI-355924">
        <id>P33993</id>
        <label>MCM7</label>
    </interactant>
    <organismsDiffer>false</organismsDiffer>
    <experiments>2</experiments>
</comment>
<comment type="interaction">
    <interactant intactId="EBI-519280">
        <id>P46527</id>
    </interactant>
    <interactant intactId="EBI-11522433">
        <id>Q5JR59-3</id>
        <label>MTUS2</label>
    </interactant>
    <organismsDiffer>false</organismsDiffer>
    <experiments>3</experiments>
</comment>
<comment type="interaction">
    <interactant intactId="EBI-519280">
        <id>P46527</id>
    </interactant>
    <interactant intactId="EBI-1018629">
        <id>P11309-1</id>
        <label>PIM1</label>
    </interactant>
    <organismsDiffer>false</organismsDiffer>
    <experiments>2</experiments>
</comment>
<comment type="interaction">
    <interactant intactId="EBI-519280">
        <id>P46527</id>
    </interactant>
    <interactant intactId="EBI-446668">
        <id>P61586</id>
        <label>RHOA</label>
    </interactant>
    <organismsDiffer>false</organismsDiffer>
    <experiments>3</experiments>
</comment>
<comment type="interaction">
    <interactant intactId="EBI-519280">
        <id>P46527</id>
    </interactant>
    <interactant intactId="EBI-963034">
        <id>Q15418</id>
        <label>RPS6KA1</label>
    </interactant>
    <organismsDiffer>false</organismsDiffer>
    <experiments>2</experiments>
</comment>
<comment type="interaction">
    <interactant intactId="EBI-519280">
        <id>P46527</id>
    </interactant>
    <interactant intactId="EBI-16087037">
        <id>Q9UQR0-1</id>
        <label>SCML2</label>
    </interactant>
    <organismsDiffer>false</organismsDiffer>
    <experiments>2</experiments>
</comment>
<comment type="interaction">
    <interactant intactId="EBI-519280">
        <id>P46527</id>
    </interactant>
    <interactant intactId="EBI-456291">
        <id>Q13309</id>
        <label>SKP2</label>
    </interactant>
    <organismsDiffer>false</organismsDiffer>
    <experiments>4</experiments>
</comment>
<comment type="interaction">
    <interactant intactId="EBI-519280">
        <id>P46527</id>
    </interactant>
    <interactant intactId="EBI-7125479">
        <id>Q5MJ70</id>
        <label>SPDYA</label>
    </interactant>
    <organismsDiffer>false</organismsDiffer>
    <experiments>3</experiments>
</comment>
<comment type="interaction">
    <interactant intactId="EBI-519280">
        <id>P46527</id>
    </interactant>
    <interactant intactId="EBI-445909">
        <id>P16949</id>
        <label>STMN1</label>
    </interactant>
    <organismsDiffer>false</organismsDiffer>
    <experiments>3</experiments>
</comment>
<comment type="interaction">
    <interactant intactId="EBI-519280">
        <id>P46527</id>
    </interactant>
    <interactant intactId="EBI-741515">
        <id>Q9NVV9</id>
        <label>THAP1</label>
    </interactant>
    <organismsDiffer>false</organismsDiffer>
    <experiments>3</experiments>
</comment>
<comment type="interaction">
    <interactant intactId="EBI-519280">
        <id>P46527</id>
    </interactant>
    <interactant intactId="EBI-355744">
        <id>Q12933</id>
        <label>TRAF2</label>
    </interactant>
    <organismsDiffer>false</organismsDiffer>
    <experiments>6</experiments>
</comment>
<comment type="interaction">
    <interactant intactId="EBI-519280">
        <id>P46527</id>
    </interactant>
    <interactant intactId="EBI-914519">
        <id>P00520</id>
        <label>Abl1</label>
    </interactant>
    <organismsDiffer>true</organismsDiffer>
    <experiments>2</experiments>
</comment>
<comment type="interaction">
    <interactant intactId="EBI-519280">
        <id>P46527</id>
    </interactant>
    <interactant intactId="EBI-646604">
        <id>Q62120</id>
        <label>Jak2</label>
    </interactant>
    <organismsDiffer>true</organismsDiffer>
    <experiments>7</experiments>
</comment>
<comment type="subcellular location">
    <subcellularLocation>
        <location>Nucleus</location>
    </subcellularLocation>
    <subcellularLocation>
        <location>Cytoplasm</location>
    </subcellularLocation>
    <subcellularLocation>
        <location evidence="1">Endosome</location>
    </subcellularLocation>
    <text evidence="1">Nuclear and cytoplasmic in quiescent cells. AKT- or RSK-mediated phosphorylation on Thr-198, binds 14-3-3, translocates to the cytoplasm and promotes cell cycle progression. Mitogen-activated UHMK1 phosphorylation on Ser-10 also results in translocation to the cytoplasm and cell cycle progression. Phosphorylation on Ser-10 facilitates nuclear export. Translocates to the nucleus on phosphorylation of Tyr-88 and Tyr-89. Colocalizes at the endosome with SNX6; this leads to lysosomal degradation (By similarity).</text>
</comment>
<comment type="tissue specificity">
    <text evidence="15 33">Expressed in kidney (at protein level) (PubMed:15509543). Expressed in all tissues tested (PubMed:8033212). Highest levels in skeletal muscle, lowest in liver and kidney (PubMed:8033212).</text>
</comment>
<comment type="induction">
    <text evidence="22">Maximal levels in quiescence cells and early G(1). Levels decrease after mitogen stimulation as cells progress toward S-phase.</text>
</comment>
<comment type="domain">
    <text>A peptide sequence containing only AA 28-79 retains substantial Kip1 cyclin A/CDK2 inhibitory activity.</text>
</comment>
<comment type="PTM">
    <text evidence="5 6 7 8 12 13 17 18 22 23 24 27 29 30">Phosphorylated; phosphorylation occurs on serine, threonine and tyrosine residues. Phosphorylation on Ser-10 is the major site of phosphorylation in resting cells, takes place at the G(0)-G(1) phase and leads to protein stability. Phosphorylation on other sites is greatly enhanced by mitogens, growth factors, cMYC and in certain cancer cell lines. The phosphorylated form found in the cytoplasm is inactivate. Phosphorylation on Thr-198 is required for interaction with 14-3-3 proteins. Phosphorylation on Thr-187, by CDK1 and CDK2 leads to protein ubiquitination and proteasomal degradation. Tyrosine phosphorylation promotes this process. Phosphorylation by PKB/AKT1 can be suppressed by LY294002, an inhibitor of the catalytic subunit of PI3K. Phosphorylation on Tyr-88 and Tyr-89 has no effect on binding CDK2, but is required for binding CDK4. Dephosphorylated on tyrosine residues by G-CSF.</text>
</comment>
<comment type="PTM">
    <text evidence="5 7 18 29">Ubiquitinated; in the cytoplasm by the KPC complex (composed of RNF123/KPC1 and UBAC1/KPC2) and, in the nucleus, by SCF(SKP2). The latter requires prior phosphorylation on Thr-187. Ubiquitinated; by a TRIM21-containing SCF(SKP2)-like complex; leads to its degradation.</text>
</comment>
<comment type="PTM">
    <text evidence="1">Subject to degradation in the lysosome. Interaction with SNX6 promotes lysosomal degradation (By similarity).</text>
</comment>
<comment type="disease" evidence="21">
    <disease id="DI-02004">
        <name>Multiple endocrine neoplasia 4</name>
        <acronym>MEN4</acronym>
        <description>Multiple endocrine neoplasia (MEN) syndromes are inherited cancer syndromes of the thyroid. MEN4 is a MEN-like syndrome with a phenotypic overlap of both MEN1 and MEN2.</description>
        <dbReference type="MIM" id="610755"/>
    </disease>
    <text>The disease is caused by variants affecting the gene represented in this entry.</text>
</comment>
<comment type="miscellaneous">
    <text>Decreased levels of p27Kip1, mainly due to proteasomal degradation, are found in various epithelial tumors originating from lung, breast, colon, ovary, esophagus, thyroid and prostate.</text>
</comment>
<comment type="similarity">
    <text evidence="42">Belongs to the CDI family.</text>
</comment>
<comment type="online information" name="Atlas of Genetics and Cytogenetics in Oncology and Haematology">
    <link uri="https://atlasgeneticsoncology.org/gene/116/CDKN1B"/>
</comment>
<gene>
    <name evidence="39" type="primary">CDKN1B</name>
    <name evidence="37" type="synonym">KIP1</name>
    <name evidence="38" type="synonym">p27</name>
</gene>
<accession>P46527</accession>
<accession>Q16307</accession>
<accession>Q5U0H2</accession>
<accession>Q9BUS6</accession>
<evidence type="ECO:0000250" key="1"/>
<evidence type="ECO:0000250" key="2">
    <source>
        <dbReference type="UniProtKB" id="P46414"/>
    </source>
</evidence>
<evidence type="ECO:0000255" key="3"/>
<evidence type="ECO:0000256" key="4">
    <source>
        <dbReference type="SAM" id="MobiDB-lite"/>
    </source>
</evidence>
<evidence type="ECO:0000269" key="5">
    <source>
    </source>
</evidence>
<evidence type="ECO:0000269" key="6">
    <source>
    </source>
</evidence>
<evidence type="ECO:0000269" key="7">
    <source>
    </source>
</evidence>
<evidence type="ECO:0000269" key="8">
    <source>
    </source>
</evidence>
<evidence type="ECO:0000269" key="9">
    <source>
    </source>
</evidence>
<evidence type="ECO:0000269" key="10">
    <source>
    </source>
</evidence>
<evidence type="ECO:0000269" key="11">
    <source>
    </source>
</evidence>
<evidence type="ECO:0000269" key="12">
    <source>
    </source>
</evidence>
<evidence type="ECO:0000269" key="13">
    <source>
    </source>
</evidence>
<evidence type="ECO:0000269" key="14">
    <source>
    </source>
</evidence>
<evidence type="ECO:0000269" key="15">
    <source>
    </source>
</evidence>
<evidence type="ECO:0000269" key="16">
    <source>
    </source>
</evidence>
<evidence type="ECO:0000269" key="17">
    <source>
    </source>
</evidence>
<evidence type="ECO:0000269" key="18">
    <source>
    </source>
</evidence>
<evidence type="ECO:0000269" key="19">
    <source>
    </source>
</evidence>
<evidence type="ECO:0000269" key="20">
    <source>
    </source>
</evidence>
<evidence type="ECO:0000269" key="21">
    <source>
    </source>
</evidence>
<evidence type="ECO:0000269" key="22">
    <source>
    </source>
</evidence>
<evidence type="ECO:0000269" key="23">
    <source>
    </source>
</evidence>
<evidence type="ECO:0000269" key="24">
    <source>
    </source>
</evidence>
<evidence type="ECO:0000269" key="25">
    <source>
    </source>
</evidence>
<evidence type="ECO:0000269" key="26">
    <source>
    </source>
</evidence>
<evidence type="ECO:0000269" key="27">
    <source>
    </source>
</evidence>
<evidence type="ECO:0000269" key="28">
    <source>
    </source>
</evidence>
<evidence type="ECO:0000269" key="29">
    <source>
    </source>
</evidence>
<evidence type="ECO:0000269" key="30">
    <source>
    </source>
</evidence>
<evidence type="ECO:0000269" key="31">
    <source>
    </source>
</evidence>
<evidence type="ECO:0000269" key="32">
    <source>
    </source>
</evidence>
<evidence type="ECO:0000269" key="33">
    <source>
    </source>
</evidence>
<evidence type="ECO:0000269" key="34">
    <source>
    </source>
</evidence>
<evidence type="ECO:0000269" key="35">
    <source ref="3"/>
</evidence>
<evidence type="ECO:0000269" key="36">
    <source ref="4"/>
</evidence>
<evidence type="ECO:0000303" key="37">
    <source>
    </source>
</evidence>
<evidence type="ECO:0000303" key="38">
    <source>
    </source>
</evidence>
<evidence type="ECO:0000303" key="39">
    <source>
    </source>
</evidence>
<evidence type="ECO:0000303" key="40">
    <source>
    </source>
</evidence>
<evidence type="ECO:0000303" key="41">
    <source>
    </source>
</evidence>
<evidence type="ECO:0000305" key="42"/>
<evidence type="ECO:0007744" key="43">
    <source>
        <dbReference type="PDB" id="5UQ3"/>
    </source>
</evidence>
<evidence type="ECO:0007744" key="44">
    <source>
    </source>
</evidence>
<evidence type="ECO:0007829" key="45">
    <source>
        <dbReference type="PDB" id="1JSU"/>
    </source>
</evidence>
<evidence type="ECO:0007829" key="46">
    <source>
        <dbReference type="PDB" id="6ATH"/>
    </source>
</evidence>
<evidence type="ECO:0007829" key="47">
    <source>
        <dbReference type="PDB" id="8BYA"/>
    </source>
</evidence>
<reference key="1">
    <citation type="journal article" date="1994" name="Cell">
        <title>Cloning of p27Kip1, a cyclin-dependent kinase inhibitor and a potential mediator of extracellular antimitogenic signals.</title>
        <authorList>
            <person name="Polyak K."/>
            <person name="Lee M.-H."/>
            <person name="Erdjument-Bromage H."/>
            <person name="Koff A."/>
            <person name="Roberts J.M."/>
            <person name="Tempst P."/>
            <person name="Massague J."/>
        </authorList>
    </citation>
    <scope>NUCLEOTIDE SEQUENCE [MRNA]</scope>
    <scope>PROTEIN SEQUENCE OF 28-79 AND 104-152</scope>
    <scope>TISSUE SPECIFICITY</scope>
    <source>
        <tissue>Kidney</tissue>
    </source>
</reference>
<reference key="2">
    <citation type="journal article" date="1995" name="Cancer Res.">
        <title>Assignment of the human p27Kip1 gene to 12p13 and its analysis in leukemias.</title>
        <authorList>
            <person name="Pietenpol J.A."/>
            <person name="Bohlander S.K."/>
            <person name="Sato Y."/>
            <person name="Papadopoulos N."/>
            <person name="Liu B."/>
            <person name="Friedman C."/>
            <person name="Trask B.J."/>
            <person name="Roberts J.M."/>
            <person name="Kinzler K.W."/>
            <person name="Rowley J.D."/>
        </authorList>
    </citation>
    <scope>NUCLEOTIDE SEQUENCE [GENOMIC DNA]</scope>
</reference>
<reference key="3">
    <citation type="submission" date="2004-10" db="EMBL/GenBank/DDBJ databases">
        <title>Cloning of human full-length CDSs in BD Creator(TM) system donor vector.</title>
        <authorList>
            <person name="Kalnine N."/>
            <person name="Chen X."/>
            <person name="Rolfs A."/>
            <person name="Halleck A."/>
            <person name="Hines L."/>
            <person name="Eisenstein S."/>
            <person name="Koundinya M."/>
            <person name="Raphael J."/>
            <person name="Moreira D."/>
            <person name="Kelley T."/>
            <person name="LaBaer J."/>
            <person name="Lin Y."/>
            <person name="Phelan M."/>
            <person name="Farmer A."/>
        </authorList>
    </citation>
    <scope>NUCLEOTIDE SEQUENCE [LARGE SCALE MRNA]</scope>
    <scope>VARIANT GLY-109</scope>
</reference>
<reference key="4">
    <citation type="submission" date="2002-02" db="EMBL/GenBank/DDBJ databases">
        <authorList>
            <consortium name="NIEHS SNPs program"/>
        </authorList>
    </citation>
    <scope>NUCLEOTIDE SEQUENCE [GENOMIC DNA]</scope>
    <scope>VARIANTS TRP-15 AND GLY-109</scope>
</reference>
<reference key="5">
    <citation type="journal article" date="2004" name="Genome Res.">
        <title>The status, quality, and expansion of the NIH full-length cDNA project: the Mammalian Gene Collection (MGC).</title>
        <authorList>
            <consortium name="The MGC Project Team"/>
        </authorList>
    </citation>
    <scope>NUCLEOTIDE SEQUENCE [LARGE SCALE MRNA]</scope>
    <scope>VARIANT GLY-109</scope>
    <source>
        <tissue>Cervix</tissue>
    </source>
</reference>
<reference key="6">
    <citation type="journal article" date="1999" name="Genes Dev.">
        <title>Ubiquitination of p27 is regulated by Cdk-dependent phosphorylation and trimeric complex formation.</title>
        <authorList>
            <person name="Montagnoli A."/>
            <person name="Fiore F."/>
            <person name="Eytan E."/>
            <person name="Carrano A.C."/>
            <person name="Draetta G.F."/>
            <person name="Hershko A."/>
            <person name="Pagano M."/>
        </authorList>
    </citation>
    <scope>UBIQUITINATION</scope>
    <scope>PHOSPHORYLATION AT THR-187</scope>
</reference>
<reference key="7">
    <citation type="journal article" date="2000" name="J. Biol. Chem.">
        <title>Phosphorylation at serine 10, a major phosphorylation site of p27(Kip1), increases its protein stability.</title>
        <authorList>
            <person name="Ishida N."/>
            <person name="Kitagawa M."/>
            <person name="Hatakeyama S."/>
            <person name="Nakayama K."/>
        </authorList>
    </citation>
    <scope>PHOSPHORYLATION AT SER-10</scope>
    <scope>FUNCTION</scope>
</reference>
<reference key="8">
    <citation type="journal article" date="2002" name="EMBO J.">
        <title>A growth factor-dependent nuclear kinase phosphorylates p27(Kip1) and regulates cell cycle progression.</title>
        <authorList>
            <person name="Boehm M."/>
            <person name="Yoshimoto T."/>
            <person name="Crook M.F."/>
            <person name="Nallamshetty S."/>
            <person name="True A."/>
            <person name="Nabel G.J."/>
            <person name="Nabel E.G."/>
        </authorList>
    </citation>
    <scope>INTERACTION WITH UHMK1</scope>
    <scope>PHOSPHORYLATION AT SER-10</scope>
    <scope>SUBCELLULAR LOCATION</scope>
    <scope>MUTAGENESIS OF SER-10 AND THR-187</scope>
</reference>
<reference key="9">
    <citation type="journal article" date="2002" name="J. Biol. Chem.">
        <title>Akt-dependent phosphorylation of p27Kip1 promotes binding to 14-3-3 and cytoplasmic localization.</title>
        <authorList>
            <person name="Fujita N."/>
            <person name="Sato S."/>
            <person name="Katayama K."/>
            <person name="Tsuruo T."/>
        </authorList>
    </citation>
    <scope>PHOSPHORYLATION AT SER-10; THR-187 AND THR-198</scope>
    <scope>INTERACTION WITH AKT1 AND YWHAQ</scope>
    <scope>SUBCELLULAR LOCATION</scope>
    <scope>MUTAGENESIS OF SER-10; THR-157; THR-187 AND THR-198</scope>
</reference>
<reference key="10">
    <citation type="journal article" date="2002" name="Nat. Med.">
        <title>Cytoplasmic relocalization and inhibition of the cyclin-dependent kinase inhibitor p27(Kip1) by PKB/Akt-mediated phosphorylation in breast cancer.</title>
        <authorList>
            <person name="Viglietto G."/>
            <person name="Motti M.L."/>
            <person name="Bruni P."/>
            <person name="Melillo R.M."/>
            <person name="D'Alessio A."/>
            <person name="Califano D."/>
            <person name="Vinci F."/>
            <person name="Chiappetta G."/>
            <person name="Tsichlis P."/>
            <person name="Bellacosa A."/>
            <person name="Fusco A."/>
            <person name="Santoro M."/>
        </authorList>
    </citation>
    <scope>PHOSPHORYLATION AT THR-157</scope>
    <scope>SUBCELLULAR LOCATION</scope>
    <scope>ASSOCIATION WITH BREAST CANCER</scope>
    <scope>MUTAGENESIS OF THR-157</scope>
</reference>
<reference key="11">
    <citation type="journal article" date="2002" name="Nat. Med.">
        <title>PKB/Akt mediates cell-cycle progression by phosphorylation of p27(Kip1) at threonine 157 and modulation of its cellular localization.</title>
        <authorList>
            <person name="Shin I."/>
            <person name="Yakes F.M."/>
            <person name="Rojo F."/>
            <person name="Shin N.-Y."/>
            <person name="Bakin A.V."/>
            <person name="Baselga J."/>
            <person name="Arteaga C.L."/>
        </authorList>
    </citation>
    <scope>PHOSPHORYLATION AT THR-157</scope>
    <scope>INTERACTION WITH AKT1</scope>
    <scope>SUBCELLULAR LOCATION</scope>
    <scope>FUNCTION</scope>
    <scope>MUTAGENESIS OF THR-157; SER-161 AND THR-162</scope>
</reference>
<reference key="12">
    <citation type="journal article" date="2003" name="J. Biol. Chem.">
        <title>Phosphorylation of p27Kip1 at threonine 198 by p90 ribosomal protein S6 kinases promotes its binding to 14-3-3 and cytoplasmic localization.</title>
        <authorList>
            <person name="Fujita N."/>
            <person name="Sato S."/>
            <person name="Tsuruo T."/>
        </authorList>
    </citation>
    <scope>PHOSPHORYLATION AT SER-10 AND THR-198</scope>
    <scope>INTERACTION WITH YWHAE; YWHAH; SFN; YWHAQ; RPS6KA1 AND RPS6KA3</scope>
    <scope>SUBCELLULAR LOCATION</scope>
    <scope>MUTAGENESIS OF THR-157 AND THR-198</scope>
</reference>
<reference key="13">
    <citation type="journal article" date="2003" name="Mol. Biol. Cell">
        <title>Spy1 interacts with p27Kip1 to allow G1/S progression.</title>
        <authorList>
            <person name="Porter L.A."/>
            <person name="Kong-Beltran M."/>
            <person name="Donoghue D.J."/>
        </authorList>
    </citation>
    <scope>INTERACTION WITH SPDYA</scope>
</reference>
<reference key="14">
    <citation type="journal article" date="2004" name="Am. J. Pathol.">
        <title>Calcineurin A-alpha but not A-beta is required for normal kidney development and function.</title>
        <authorList>
            <person name="Gooch J.L."/>
            <person name="Toro J.J."/>
            <person name="Guler R.L."/>
            <person name="Barnes J.L."/>
        </authorList>
    </citation>
    <scope>TISSUE SPECIFICITY</scope>
</reference>
<reference key="15">
    <citation type="journal article" date="2004" name="Cell Cycle">
        <title>Akt-dependent T198 phosphorylation of cyclin-dependent kinase inhibitor p27kip1 in breast cancer.</title>
        <authorList>
            <person name="Motti M.L."/>
            <person name="De Marco C."/>
            <person name="Califano D."/>
            <person name="Fusco A."/>
            <person name="Viglietto G."/>
        </authorList>
    </citation>
    <scope>PHOSPHORYLATION AT THR-198</scope>
    <scope>SUBCELLULAR LOCATION</scope>
    <scope>MUTAGENESIS OF SER-10; THR-157; THR-187 AND THR-198</scope>
</reference>
<reference key="16">
    <citation type="journal article" date="2005" name="Nat. Cell Biol.">
        <title>Cdc2-cyclin E complexes regulate the G1/S phase transition.</title>
        <authorList>
            <person name="Aleem E."/>
            <person name="Kiyokawa H."/>
            <person name="Kaldis P."/>
        </authorList>
    </citation>
    <scope>INTERACTION WITH CDK1</scope>
</reference>
<reference key="17">
    <citation type="journal article" date="2006" name="Blood">
        <title>Tyrosine phosphorylation modulates binding preference to cyclin-dependent kinases and subcellular localization of p27Kip1 in the acute promyelocytic leukemia cell line NB4.</title>
        <authorList>
            <person name="Kardinal C."/>
            <person name="Dangers M."/>
            <person name="Kardinal A."/>
            <person name="Koch A."/>
            <person name="Brandt D.T."/>
            <person name="Tamura T."/>
            <person name="Welte K."/>
        </authorList>
    </citation>
    <scope>PHOSPHORYLATION AT TYR-88 AND TYR-89</scope>
    <scope>DEPHOSPHORYLATION</scope>
    <scope>INTERACTION WITH GRB2; CDK2 AND CDK4</scope>
    <scope>SUBCELLULAR LOCATION</scope>
    <scope>MUTAGENESIS OF TYR-74; TYR-88 AND TYR-89</scope>
</reference>
<reference key="18">
    <citation type="journal article" date="2006" name="Mol. Cell. Biol.">
        <title>Regulated activating Thr172 phosphorylation of cyclin-dependent kinase 4(CDK4): its relationship with cyclins and CDK 'inhibitors'.</title>
        <authorList>
            <person name="Bockstaele L."/>
            <person name="Kooken H."/>
            <person name="Libert F."/>
            <person name="Paternot S."/>
            <person name="Dumont J.E."/>
            <person name="de Launoit Y."/>
            <person name="Roger P.P."/>
            <person name="Coulonval K."/>
        </authorList>
    </citation>
    <scope>INTERACTION WITH CDK4</scope>
    <scope>FUNCTION</scope>
</reference>
<reference key="19">
    <citation type="journal article" date="2006" name="Mol. Cell. Biol.">
        <title>Regulation of p27 degradation and S-phase progression by Ro52 RING finger protein.</title>
        <authorList>
            <person name="Sabile A."/>
            <person name="Meyer A.M."/>
            <person name="Wirbelauer C."/>
            <person name="Hess D."/>
            <person name="Kogel U."/>
            <person name="Scheffner M."/>
            <person name="Krek W."/>
        </authorList>
    </citation>
    <scope>UBIQUITINATION</scope>
    <scope>MUTAGENESIS OF THR-187</scope>
</reference>
<reference key="20">
    <citation type="journal article" date="2006" name="Proc. Natl. Acad. Sci. U.S.A.">
        <title>Germ-line mutations in p27(Kip1) cause a multiple endocrine neoplasia syndrome in rats and humans.</title>
        <authorList>
            <person name="Pellegata N.S."/>
            <person name="Quintanilla-Martinez L."/>
            <person name="Siggelkow H."/>
            <person name="Samson E."/>
            <person name="Bink K."/>
            <person name="Hoefler H."/>
            <person name="Fend F."/>
            <person name="Graw J."/>
            <person name="Atkinson M.J."/>
        </authorList>
    </citation>
    <scope>INVOLVEMENT IN MEN4</scope>
</reference>
<reference key="21">
    <citation type="journal article" date="2007" name="Cell">
        <title>p27 phosphorylation by Src regulates inhibition of cyclin E-Cdk2.</title>
        <authorList>
            <person name="Chu I."/>
            <person name="Sun J."/>
            <person name="Arnaout A."/>
            <person name="Kahn H."/>
            <person name="Hanna W."/>
            <person name="Narod S."/>
            <person name="Sun P."/>
            <person name="Tan C.K."/>
            <person name="Hengst L."/>
            <person name="Slingerland J."/>
        </authorList>
    </citation>
    <scope>PHOSPHORYLATION AT TYR-74 AND TYR-88 BY SRC</scope>
</reference>
<reference key="22">
    <citation type="journal article" date="2007" name="Science">
        <title>ATM and ATR substrate analysis reveals extensive protein networks responsive to DNA damage.</title>
        <authorList>
            <person name="Matsuoka S."/>
            <person name="Ballif B.A."/>
            <person name="Smogorzewska A."/>
            <person name="McDonald E.R. III"/>
            <person name="Hurov K.E."/>
            <person name="Luo J."/>
            <person name="Bakalarski C.E."/>
            <person name="Zhao Z."/>
            <person name="Solimini N."/>
            <person name="Lerenthal Y."/>
            <person name="Shiloh Y."/>
            <person name="Gygi S.P."/>
            <person name="Elledge S.J."/>
        </authorList>
    </citation>
    <scope>IDENTIFICATION BY MASS SPECTROMETRY [LARGE SCALE ANALYSIS]</scope>
    <source>
        <tissue>Embryonic kidney</tissue>
    </source>
</reference>
<reference key="23">
    <citation type="journal article" date="2008" name="Cancer Res.">
        <title>Pim kinases promote cell cycle progression by phosphorylating and down-regulating p27Kip1 at the transcriptional and posttranscriptional levels.</title>
        <authorList>
            <person name="Morishita D."/>
            <person name="Katayama R."/>
            <person name="Sekimizu K."/>
            <person name="Tsuruo T."/>
            <person name="Fujita N."/>
        </authorList>
    </citation>
    <scope>INTERACTION WITH PIM1</scope>
    <scope>PHOSPHORYLATION AT THR-157 AND THR-198</scope>
</reference>
<reference key="24">
    <citation type="journal article" date="2009" name="Mol. Cell. Biol.">
        <title>p27Kip1 inhibits cyclin D-cyclin-dependent kinase 4 by two independent modes.</title>
        <authorList>
            <person name="Ray A."/>
            <person name="James M.K."/>
            <person name="Larochelle S."/>
            <person name="Fisher R.P."/>
            <person name="Blain S.W."/>
        </authorList>
    </citation>
    <scope>INTERACTION WITH CDK4</scope>
    <scope>PHOSPHORYLATION</scope>
    <scope>FUNCTION</scope>
    <scope>MUTAGENESIS OF TYR-74; TYR-88 AND TYR-89</scope>
</reference>
<reference key="25">
    <citation type="journal article" date="2011" name="Cancer Discov.">
        <title>PPM1H is a p27 phosphatase implicated in trastuzumab resistance.</title>
        <authorList>
            <person name="Lee-Hoeflich S.T."/>
            <person name="Pham T.Q."/>
            <person name="Dowbenko D."/>
            <person name="Munroe X."/>
            <person name="Lee J."/>
            <person name="Li L."/>
            <person name="Zhou W."/>
            <person name="Haverty P.M."/>
            <person name="Pujara K."/>
            <person name="Stinson J."/>
            <person name="Chan S.M."/>
            <person name="Eastham-Anderson J."/>
            <person name="Pandita A."/>
            <person name="Seshagiri S."/>
            <person name="Hoeflich K.P."/>
            <person name="Turashvili G."/>
            <person name="Gelmon K.A."/>
            <person name="Aparicio S.A."/>
            <person name="Davis D.P."/>
            <person name="Sliwkowski M.X."/>
            <person name="Stern H.M."/>
        </authorList>
    </citation>
    <scope>DEPHOSPHORYLATION BY PPM1H AT THR-187</scope>
</reference>
<reference key="26">
    <citation type="journal article" date="2011" name="Oncogene">
        <title>Phosphorylation of p27Kip1 by JAK2 directly links cytokine receptor signaling to cell cycle control.</title>
        <authorList>
            <person name="Jakel H."/>
            <person name="Weinl C."/>
            <person name="Hengst L."/>
        </authorList>
    </citation>
    <scope>PHOSPHORYLATION AT TYR-88 BY JAK2</scope>
</reference>
<reference key="27">
    <citation type="journal article" date="2013" name="Cell. Signal.">
        <title>Fbxl12 triggers G1 arrest by mediating degradation of calmodulin kinase I.</title>
        <authorList>
            <person name="Mallampalli R.K."/>
            <person name="Kaercher L."/>
            <person name="Snavely C."/>
            <person name="Pulijala R."/>
            <person name="Chen B.B."/>
            <person name="Coon T."/>
            <person name="Zhao J."/>
            <person name="Agassandian M."/>
        </authorList>
    </citation>
    <scope>PHOSPHORYLATION AT THR-157 AND THR-198 BY CAMK1</scope>
</reference>
<reference key="28">
    <citation type="journal article" date="2013" name="J. Proteome Res.">
        <title>Toward a comprehensive characterization of a human cancer cell phosphoproteome.</title>
        <authorList>
            <person name="Zhou H."/>
            <person name="Di Palma S."/>
            <person name="Preisinger C."/>
            <person name="Peng M."/>
            <person name="Polat A.N."/>
            <person name="Heck A.J."/>
            <person name="Mohammed S."/>
        </authorList>
    </citation>
    <scope>PHOSPHORYLATION [LARGE SCALE ANALYSIS] AT SER-10</scope>
    <scope>IDENTIFICATION BY MASS SPECTROMETRY [LARGE SCALE ANALYSIS]</scope>
    <source>
        <tissue>Cervix carcinoma</tissue>
    </source>
</reference>
<reference key="29">
    <citation type="journal article" date="2013" name="Mol. Cell">
        <title>Regulation of the CRL4(Cdt2) ubiquitin ligase and cell-cycle exit by the SCF(Fbxo11) ubiquitin ligase.</title>
        <authorList>
            <person name="Rossi M."/>
            <person name="Duan S."/>
            <person name="Jeong Y.T."/>
            <person name="Horn M."/>
            <person name="Saraf A."/>
            <person name="Florens L."/>
            <person name="Washburn M.P."/>
            <person name="Antebi A."/>
            <person name="Pagano M."/>
        </authorList>
    </citation>
    <scope>PHOSPHORYLATION AT THR-187 BY CDK1 AND CDK2</scope>
</reference>
<reference key="30">
    <citation type="journal article" date="2016" name="Biochem. Biophys. Res. Commun.">
        <title>Salivary protein histatin 3 regulates cell proliferation by enhancing p27(Kip1) and heat shock cognate protein 70 ubiquitination.</title>
        <authorList>
            <person name="Imamura Y."/>
            <person name="Wang P.L."/>
            <person name="Masuno K."/>
            <person name="Sogawa N."/>
        </authorList>
    </citation>
    <scope>INTERACTION WITH HSPA8</scope>
</reference>
<reference key="31">
    <citation type="journal article" date="1996" name="Nature">
        <title>Crystal structure of the p27Kip1 cyclin-dependent-kinase inhibitor bound to the cyclin A-Cdk2 complex.</title>
        <authorList>
            <person name="Russo A.A."/>
            <person name="Jeffrey P.D."/>
            <person name="Patten A.K."/>
            <person name="Massague J."/>
            <person name="Pavletich N.P."/>
        </authorList>
    </citation>
    <scope>X-RAY CRYSTALLOGRAPHY (2.3 ANGSTROMS) OF 23-106 IN COMPLEX WITH CCNA2 AND CDK2</scope>
</reference>
<reference key="32">
    <citation type="journal article" date="2005" name="Mol. Cell">
        <title>Structural basis of the Cks1-dependent recognition of p27(Kip1) by the SCF(Skp2) ubiquitin ligase.</title>
        <authorList>
            <person name="Hao B."/>
            <person name="Zheng N."/>
            <person name="Schulman B.A."/>
            <person name="Wu G."/>
            <person name="Miller J.J."/>
            <person name="Pagano M."/>
            <person name="Pavletich N.P."/>
        </authorList>
    </citation>
    <scope>X-RAY CRYSTALLOGRAPHY (2.3 ANGSTROMS) OF 181-190 IN COMPLEX WITH SKP1; SKP2 AND CKS1B</scope>
    <scope>PHOSPHORYLATION AT THR-187</scope>
    <scope>MUTAGENESIS OF GLU-185 AND THR-187</scope>
    <scope>UBIQUITINATION</scope>
</reference>
<reference key="33">
    <citation type="journal article" date="2007" name="Cell">
        <title>Cdk-inhibitory activity and stability of p27Kip1 are directly regulated by oncogenic tyrosine kinases.</title>
        <authorList>
            <person name="Grimmler M."/>
            <person name="Wang Y."/>
            <person name="Mund T."/>
            <person name="Cilensek Z."/>
            <person name="Keidel E.-M."/>
            <person name="Waddell M.B."/>
            <person name="Jaekel H."/>
            <person name="Kullmann M."/>
            <person name="Kriwacki R.W."/>
            <person name="Hengst L."/>
        </authorList>
    </citation>
    <scope>STRUCTURE BY NMR OF 22-104</scope>
    <scope>PHOSPHORYLATION AT TYR-88</scope>
    <scope>FUNCTION</scope>
    <scope>INDUCTION</scope>
    <scope>INTERACTION WITH LYN</scope>
    <scope>IDENTIFICATION BY MASS SPECTROMETRY</scope>
    <scope>MUTAGENESIS OF TYR-88 AND TYR-89</scope>
</reference>
<reference evidence="43" key="34">
    <citation type="journal article" date="2017" name="EMBO J.">
        <title>Structural basis of divergent cyclin-dependent kinase activation by Spy1/RINGO proteins.</title>
        <authorList>
            <person name="McGrath D.A."/>
            <person name="Fifield B.A."/>
            <person name="Marceau A.H."/>
            <person name="Tripathi S."/>
            <person name="Porter L.A."/>
            <person name="Rubin S.M."/>
        </authorList>
    </citation>
    <scope>X-RAY CRYSTALLOGRAPHY (3.60 ANGSTROMS) IN COMPLEX WITH CDK2 AND SPDYA</scope>
    <scope>FUNCTION</scope>
    <scope>SUBUNIT</scope>
</reference>
<reference key="35">
    <citation type="journal article" date="2010" name="Hum. Mutat.">
        <title>A novel germline CDKN1B mutation causing multiple endocrine tumors: clinical, genetic and functional characterization.</title>
        <authorList>
            <person name="Molatore S."/>
            <person name="Marinoni I."/>
            <person name="Lee M."/>
            <person name="Pulz E."/>
            <person name="Ambrosio M.R."/>
            <person name="degli Uberti E.C."/>
            <person name="Zatelli M.C."/>
            <person name="Pellegata N.S."/>
        </authorList>
    </citation>
    <scope>VARIANT LEU-69</scope>
    <scope>CHARACTERIZATION OF VARIANT LEU-69</scope>
</reference>
<protein>
    <recommendedName>
        <fullName>Cyclin-dependent kinase inhibitor 1B</fullName>
    </recommendedName>
    <alternativeName>
        <fullName evidence="40">Cyclin-dependent kinase inhibitor p27</fullName>
    </alternativeName>
    <alternativeName>
        <fullName evidence="41">p27Kip1</fullName>
    </alternativeName>
</protein>